<comment type="function">
    <text evidence="1">Catalyzes the reversible isomerization of glucose-6-phosphate to fructose-6-phosphate.</text>
</comment>
<comment type="catalytic activity">
    <reaction evidence="1">
        <text>alpha-D-glucose 6-phosphate = beta-D-fructose 6-phosphate</text>
        <dbReference type="Rhea" id="RHEA:11816"/>
        <dbReference type="ChEBI" id="CHEBI:57634"/>
        <dbReference type="ChEBI" id="CHEBI:58225"/>
        <dbReference type="EC" id="5.3.1.9"/>
    </reaction>
</comment>
<comment type="pathway">
    <text evidence="1">Carbohydrate biosynthesis; gluconeogenesis.</text>
</comment>
<comment type="pathway">
    <text evidence="1">Carbohydrate degradation; glycolysis; D-glyceraldehyde 3-phosphate and glycerone phosphate from D-glucose: step 2/4.</text>
</comment>
<comment type="subcellular location">
    <subcellularLocation>
        <location evidence="1">Cytoplasm</location>
    </subcellularLocation>
</comment>
<comment type="similarity">
    <text evidence="1">Belongs to the GPI family.</text>
</comment>
<dbReference type="EC" id="5.3.1.9" evidence="1"/>
<dbReference type="EMBL" id="CU928164">
    <property type="protein sequence ID" value="CAR20553.1"/>
    <property type="molecule type" value="Genomic_DNA"/>
</dbReference>
<dbReference type="RefSeq" id="WP_000789981.1">
    <property type="nucleotide sequence ID" value="NC_011750.1"/>
</dbReference>
<dbReference type="RefSeq" id="YP_002410320.1">
    <property type="nucleotide sequence ID" value="NC_011750.1"/>
</dbReference>
<dbReference type="SMR" id="B7NRZ0"/>
<dbReference type="STRING" id="585057.ECIAI39_4447"/>
<dbReference type="KEGG" id="ect:ECIAI39_4447"/>
<dbReference type="PATRIC" id="fig|585057.6.peg.4593"/>
<dbReference type="HOGENOM" id="CLU_017947_3_1_6"/>
<dbReference type="UniPathway" id="UPA00109">
    <property type="reaction ID" value="UER00181"/>
</dbReference>
<dbReference type="UniPathway" id="UPA00138"/>
<dbReference type="Proteomes" id="UP000000749">
    <property type="component" value="Chromosome"/>
</dbReference>
<dbReference type="GO" id="GO:0005829">
    <property type="term" value="C:cytosol"/>
    <property type="evidence" value="ECO:0007669"/>
    <property type="project" value="TreeGrafter"/>
</dbReference>
<dbReference type="GO" id="GO:0097367">
    <property type="term" value="F:carbohydrate derivative binding"/>
    <property type="evidence" value="ECO:0007669"/>
    <property type="project" value="InterPro"/>
</dbReference>
<dbReference type="GO" id="GO:0004347">
    <property type="term" value="F:glucose-6-phosphate isomerase activity"/>
    <property type="evidence" value="ECO:0007669"/>
    <property type="project" value="UniProtKB-UniRule"/>
</dbReference>
<dbReference type="GO" id="GO:0048029">
    <property type="term" value="F:monosaccharide binding"/>
    <property type="evidence" value="ECO:0007669"/>
    <property type="project" value="TreeGrafter"/>
</dbReference>
<dbReference type="GO" id="GO:0006094">
    <property type="term" value="P:gluconeogenesis"/>
    <property type="evidence" value="ECO:0007669"/>
    <property type="project" value="UniProtKB-UniRule"/>
</dbReference>
<dbReference type="GO" id="GO:0051156">
    <property type="term" value="P:glucose 6-phosphate metabolic process"/>
    <property type="evidence" value="ECO:0007669"/>
    <property type="project" value="TreeGrafter"/>
</dbReference>
<dbReference type="GO" id="GO:0006096">
    <property type="term" value="P:glycolytic process"/>
    <property type="evidence" value="ECO:0007669"/>
    <property type="project" value="UniProtKB-UniRule"/>
</dbReference>
<dbReference type="CDD" id="cd05015">
    <property type="entry name" value="SIS_PGI_1"/>
    <property type="match status" value="1"/>
</dbReference>
<dbReference type="CDD" id="cd05016">
    <property type="entry name" value="SIS_PGI_2"/>
    <property type="match status" value="1"/>
</dbReference>
<dbReference type="FunFam" id="1.10.1390.10:FF:000001">
    <property type="entry name" value="Glucose-6-phosphate isomerase"/>
    <property type="match status" value="1"/>
</dbReference>
<dbReference type="FunFam" id="3.40.50.10490:FF:000004">
    <property type="entry name" value="Glucose-6-phosphate isomerase"/>
    <property type="match status" value="1"/>
</dbReference>
<dbReference type="Gene3D" id="1.10.1390.10">
    <property type="match status" value="1"/>
</dbReference>
<dbReference type="Gene3D" id="3.40.50.10490">
    <property type="entry name" value="Glucose-6-phosphate isomerase like protein, domain 1"/>
    <property type="match status" value="2"/>
</dbReference>
<dbReference type="HAMAP" id="MF_00473">
    <property type="entry name" value="G6P_isomerase"/>
    <property type="match status" value="1"/>
</dbReference>
<dbReference type="InterPro" id="IPR001672">
    <property type="entry name" value="G6P_Isomerase"/>
</dbReference>
<dbReference type="InterPro" id="IPR023096">
    <property type="entry name" value="G6P_Isomerase_C"/>
</dbReference>
<dbReference type="InterPro" id="IPR018189">
    <property type="entry name" value="Phosphoglucose_isomerase_CS"/>
</dbReference>
<dbReference type="InterPro" id="IPR046348">
    <property type="entry name" value="SIS_dom_sf"/>
</dbReference>
<dbReference type="InterPro" id="IPR035476">
    <property type="entry name" value="SIS_PGI_1"/>
</dbReference>
<dbReference type="InterPro" id="IPR035482">
    <property type="entry name" value="SIS_PGI_2"/>
</dbReference>
<dbReference type="NCBIfam" id="NF001211">
    <property type="entry name" value="PRK00179.1"/>
    <property type="match status" value="1"/>
</dbReference>
<dbReference type="PANTHER" id="PTHR11469">
    <property type="entry name" value="GLUCOSE-6-PHOSPHATE ISOMERASE"/>
    <property type="match status" value="1"/>
</dbReference>
<dbReference type="PANTHER" id="PTHR11469:SF1">
    <property type="entry name" value="GLUCOSE-6-PHOSPHATE ISOMERASE"/>
    <property type="match status" value="1"/>
</dbReference>
<dbReference type="Pfam" id="PF00342">
    <property type="entry name" value="PGI"/>
    <property type="match status" value="1"/>
</dbReference>
<dbReference type="PRINTS" id="PR00662">
    <property type="entry name" value="G6PISOMERASE"/>
</dbReference>
<dbReference type="SUPFAM" id="SSF53697">
    <property type="entry name" value="SIS domain"/>
    <property type="match status" value="1"/>
</dbReference>
<dbReference type="PROSITE" id="PS00765">
    <property type="entry name" value="P_GLUCOSE_ISOMERASE_1"/>
    <property type="match status" value="1"/>
</dbReference>
<dbReference type="PROSITE" id="PS00174">
    <property type="entry name" value="P_GLUCOSE_ISOMERASE_2"/>
    <property type="match status" value="1"/>
</dbReference>
<dbReference type="PROSITE" id="PS51463">
    <property type="entry name" value="P_GLUCOSE_ISOMERASE_3"/>
    <property type="match status" value="1"/>
</dbReference>
<proteinExistence type="inferred from homology"/>
<organism>
    <name type="scientific">Escherichia coli O7:K1 (strain IAI39 / ExPEC)</name>
    <dbReference type="NCBI Taxonomy" id="585057"/>
    <lineage>
        <taxon>Bacteria</taxon>
        <taxon>Pseudomonadati</taxon>
        <taxon>Pseudomonadota</taxon>
        <taxon>Gammaproteobacteria</taxon>
        <taxon>Enterobacterales</taxon>
        <taxon>Enterobacteriaceae</taxon>
        <taxon>Escherichia</taxon>
    </lineage>
</organism>
<keyword id="KW-0007">Acetylation</keyword>
<keyword id="KW-0963">Cytoplasm</keyword>
<keyword id="KW-0312">Gluconeogenesis</keyword>
<keyword id="KW-0324">Glycolysis</keyword>
<keyword id="KW-0413">Isomerase</keyword>
<protein>
    <recommendedName>
        <fullName evidence="1">Glucose-6-phosphate isomerase</fullName>
        <shortName evidence="1">GPI</shortName>
        <ecNumber evidence="1">5.3.1.9</ecNumber>
    </recommendedName>
    <alternativeName>
        <fullName evidence="1">Phosphoglucose isomerase</fullName>
        <shortName evidence="1">PGI</shortName>
    </alternativeName>
    <alternativeName>
        <fullName evidence="1">Phosphohexose isomerase</fullName>
        <shortName evidence="1">PHI</shortName>
    </alternativeName>
</protein>
<evidence type="ECO:0000255" key="1">
    <source>
        <dbReference type="HAMAP-Rule" id="MF_00473"/>
    </source>
</evidence>
<name>G6PI_ECO7I</name>
<gene>
    <name evidence="1" type="primary">pgi</name>
    <name type="ordered locus">ECIAI39_4447</name>
</gene>
<feature type="chain" id="PRO_1000125718" description="Glucose-6-phosphate isomerase">
    <location>
        <begin position="1"/>
        <end position="549"/>
    </location>
</feature>
<feature type="active site" description="Proton donor" evidence="1">
    <location>
        <position position="355"/>
    </location>
</feature>
<feature type="active site" evidence="1">
    <location>
        <position position="386"/>
    </location>
</feature>
<feature type="active site" evidence="1">
    <location>
        <position position="514"/>
    </location>
</feature>
<feature type="modified residue" description="N6-acetyllysine" evidence="1">
    <location>
        <position position="80"/>
    </location>
</feature>
<feature type="modified residue" description="N6-acetyllysine" evidence="1">
    <location>
        <position position="228"/>
    </location>
</feature>
<feature type="modified residue" description="N6-acetyllysine" evidence="1">
    <location>
        <position position="234"/>
    </location>
</feature>
<sequence>MKNINPTQTAAWQALQKHFDEMKDVTIADLFAKDGDRFSKFSATFDDQMLVDYSKNRITEETLAKLQDLAKECDLAGAIKSMFSGEKINRTENRAVLHVALRNRSNTPILVDGKDVMPEVNAVLEKMKTFSEAIISGEWKGYTGKAITDVVNIGIGGSDLGPYMVTEALRPYKNHLNMHFVSNVDGTHIAEVLKKVNPETTLFLVASKTFTTQETMTNAHSARDWFLKAAGDEKHVAKHFAALSTNAKAVGEFGIDTANMFEFWDWVGGRYSLWSAIGLSIVLSIGFDNFVELLSGAHAMDKHFSTTPAEKNLPVLLALIGIWYNNFFGAETEAILPYDQYMHRFAAYFQQGNMESNGKYVDRNGKVVDYQTGPIIWGEPGTNGQHAFYQLIHQGTKMVPCDFIAPAITHNPLSDHHQKLLSNFFAQTEALAFGKSREVVEQEYRDQGKDPATLDYVVPFKVFEGNRPTNSILLREITPFSLGALIALYEHKIFTQGVILNIFTFDQWGVELGKQLANRILPELKDDKEISSHDSSTNGLINRYKAWRG</sequence>
<reference key="1">
    <citation type="journal article" date="2009" name="PLoS Genet.">
        <title>Organised genome dynamics in the Escherichia coli species results in highly diverse adaptive paths.</title>
        <authorList>
            <person name="Touchon M."/>
            <person name="Hoede C."/>
            <person name="Tenaillon O."/>
            <person name="Barbe V."/>
            <person name="Baeriswyl S."/>
            <person name="Bidet P."/>
            <person name="Bingen E."/>
            <person name="Bonacorsi S."/>
            <person name="Bouchier C."/>
            <person name="Bouvet O."/>
            <person name="Calteau A."/>
            <person name="Chiapello H."/>
            <person name="Clermont O."/>
            <person name="Cruveiller S."/>
            <person name="Danchin A."/>
            <person name="Diard M."/>
            <person name="Dossat C."/>
            <person name="Karoui M.E."/>
            <person name="Frapy E."/>
            <person name="Garry L."/>
            <person name="Ghigo J.M."/>
            <person name="Gilles A.M."/>
            <person name="Johnson J."/>
            <person name="Le Bouguenec C."/>
            <person name="Lescat M."/>
            <person name="Mangenot S."/>
            <person name="Martinez-Jehanne V."/>
            <person name="Matic I."/>
            <person name="Nassif X."/>
            <person name="Oztas S."/>
            <person name="Petit M.A."/>
            <person name="Pichon C."/>
            <person name="Rouy Z."/>
            <person name="Ruf C.S."/>
            <person name="Schneider D."/>
            <person name="Tourret J."/>
            <person name="Vacherie B."/>
            <person name="Vallenet D."/>
            <person name="Medigue C."/>
            <person name="Rocha E.P.C."/>
            <person name="Denamur E."/>
        </authorList>
    </citation>
    <scope>NUCLEOTIDE SEQUENCE [LARGE SCALE GENOMIC DNA]</scope>
    <source>
        <strain>IAI39 / ExPEC</strain>
    </source>
</reference>
<accession>B7NRZ0</accession>